<proteinExistence type="inferred from homology"/>
<feature type="chain" id="PRO_0000368846" description="ATP synthase subunit b">
    <location>
        <begin position="1"/>
        <end position="156"/>
    </location>
</feature>
<feature type="transmembrane region" description="Helical" evidence="1">
    <location>
        <begin position="7"/>
        <end position="29"/>
    </location>
</feature>
<dbReference type="EMBL" id="CP000116">
    <property type="protein sequence ID" value="AAZ98754.1"/>
    <property type="molecule type" value="Genomic_DNA"/>
</dbReference>
<dbReference type="RefSeq" id="WP_011313313.1">
    <property type="nucleotide sequence ID" value="NC_007404.1"/>
</dbReference>
<dbReference type="SMR" id="Q3SF62"/>
<dbReference type="STRING" id="292415.Tbd_2801"/>
<dbReference type="KEGG" id="tbd:Tbd_2801"/>
<dbReference type="eggNOG" id="COG0711">
    <property type="taxonomic scope" value="Bacteria"/>
</dbReference>
<dbReference type="HOGENOM" id="CLU_079215_4_5_4"/>
<dbReference type="OrthoDB" id="9788020at2"/>
<dbReference type="Proteomes" id="UP000008291">
    <property type="component" value="Chromosome"/>
</dbReference>
<dbReference type="GO" id="GO:0005886">
    <property type="term" value="C:plasma membrane"/>
    <property type="evidence" value="ECO:0007669"/>
    <property type="project" value="UniProtKB-SubCell"/>
</dbReference>
<dbReference type="GO" id="GO:0045259">
    <property type="term" value="C:proton-transporting ATP synthase complex"/>
    <property type="evidence" value="ECO:0007669"/>
    <property type="project" value="UniProtKB-KW"/>
</dbReference>
<dbReference type="GO" id="GO:0046933">
    <property type="term" value="F:proton-transporting ATP synthase activity, rotational mechanism"/>
    <property type="evidence" value="ECO:0007669"/>
    <property type="project" value="UniProtKB-UniRule"/>
</dbReference>
<dbReference type="GO" id="GO:0046961">
    <property type="term" value="F:proton-transporting ATPase activity, rotational mechanism"/>
    <property type="evidence" value="ECO:0007669"/>
    <property type="project" value="TreeGrafter"/>
</dbReference>
<dbReference type="CDD" id="cd06503">
    <property type="entry name" value="ATP-synt_Fo_b"/>
    <property type="match status" value="1"/>
</dbReference>
<dbReference type="FunFam" id="1.20.5.620:FF:000001">
    <property type="entry name" value="ATP synthase subunit b"/>
    <property type="match status" value="1"/>
</dbReference>
<dbReference type="Gene3D" id="1.20.5.620">
    <property type="entry name" value="F1F0 ATP synthase subunit B, membrane domain"/>
    <property type="match status" value="1"/>
</dbReference>
<dbReference type="HAMAP" id="MF_01398">
    <property type="entry name" value="ATP_synth_b_bprime"/>
    <property type="match status" value="1"/>
</dbReference>
<dbReference type="InterPro" id="IPR028987">
    <property type="entry name" value="ATP_synth_B-like_membr_sf"/>
</dbReference>
<dbReference type="InterPro" id="IPR002146">
    <property type="entry name" value="ATP_synth_b/b'su_bac/chlpt"/>
</dbReference>
<dbReference type="InterPro" id="IPR005864">
    <property type="entry name" value="ATP_synth_F0_bsu_bac"/>
</dbReference>
<dbReference type="InterPro" id="IPR050059">
    <property type="entry name" value="ATP_synthase_B_chain"/>
</dbReference>
<dbReference type="NCBIfam" id="TIGR01144">
    <property type="entry name" value="ATP_synt_b"/>
    <property type="match status" value="1"/>
</dbReference>
<dbReference type="NCBIfam" id="NF004411">
    <property type="entry name" value="PRK05759.1-2"/>
    <property type="match status" value="1"/>
</dbReference>
<dbReference type="PANTHER" id="PTHR33445:SF1">
    <property type="entry name" value="ATP SYNTHASE SUBUNIT B"/>
    <property type="match status" value="1"/>
</dbReference>
<dbReference type="PANTHER" id="PTHR33445">
    <property type="entry name" value="ATP SYNTHASE SUBUNIT B', CHLOROPLASTIC"/>
    <property type="match status" value="1"/>
</dbReference>
<dbReference type="Pfam" id="PF00430">
    <property type="entry name" value="ATP-synt_B"/>
    <property type="match status" value="1"/>
</dbReference>
<dbReference type="SUPFAM" id="SSF81573">
    <property type="entry name" value="F1F0 ATP synthase subunit B, membrane domain"/>
    <property type="match status" value="1"/>
</dbReference>
<protein>
    <recommendedName>
        <fullName evidence="1">ATP synthase subunit b</fullName>
    </recommendedName>
    <alternativeName>
        <fullName evidence="1">ATP synthase F(0) sector subunit b</fullName>
    </alternativeName>
    <alternativeName>
        <fullName evidence="1">ATPase subunit I</fullName>
    </alternativeName>
    <alternativeName>
        <fullName evidence="1">F-type ATPase subunit b</fullName>
        <shortName evidence="1">F-ATPase subunit b</shortName>
    </alternativeName>
</protein>
<gene>
    <name evidence="1" type="primary">atpF</name>
    <name type="ordered locus">Tbd_2801</name>
</gene>
<comment type="function">
    <text evidence="1">F(1)F(0) ATP synthase produces ATP from ADP in the presence of a proton or sodium gradient. F-type ATPases consist of two structural domains, F(1) containing the extramembraneous catalytic core and F(0) containing the membrane proton channel, linked together by a central stalk and a peripheral stalk. During catalysis, ATP synthesis in the catalytic domain of F(1) is coupled via a rotary mechanism of the central stalk subunits to proton translocation.</text>
</comment>
<comment type="function">
    <text evidence="1">Component of the F(0) channel, it forms part of the peripheral stalk, linking F(1) to F(0).</text>
</comment>
<comment type="subunit">
    <text evidence="1">F-type ATPases have 2 components, F(1) - the catalytic core - and F(0) - the membrane proton channel. F(1) has five subunits: alpha(3), beta(3), gamma(1), delta(1), epsilon(1). F(0) has three main subunits: a(1), b(2) and c(10-14). The alpha and beta chains form an alternating ring which encloses part of the gamma chain. F(1) is attached to F(0) by a central stalk formed by the gamma and epsilon chains, while a peripheral stalk is formed by the delta and b chains.</text>
</comment>
<comment type="subcellular location">
    <subcellularLocation>
        <location evidence="1">Cell inner membrane</location>
        <topology evidence="1">Single-pass membrane protein</topology>
    </subcellularLocation>
</comment>
<comment type="similarity">
    <text evidence="1">Belongs to the ATPase B chain family.</text>
</comment>
<reference key="1">
    <citation type="journal article" date="2006" name="J. Bacteriol.">
        <title>The genome sequence of the obligately chemolithoautotrophic, facultatively anaerobic bacterium Thiobacillus denitrificans.</title>
        <authorList>
            <person name="Beller H.R."/>
            <person name="Chain P.S."/>
            <person name="Letain T.E."/>
            <person name="Chakicherla A."/>
            <person name="Larimer F.W."/>
            <person name="Richardson P.M."/>
            <person name="Coleman M.A."/>
            <person name="Wood A.P."/>
            <person name="Kelly D.P."/>
        </authorList>
    </citation>
    <scope>NUCLEOTIDE SEQUENCE [LARGE SCALE GENOMIC DNA]</scope>
    <source>
        <strain>ATCC 25259 / T1</strain>
    </source>
</reference>
<sequence>MNFNATLIGQSITFIFFVWFSMKFVWPPIMNALETRKKQIADGLAAADRGKHELELAAKKAGDNMRDAKAQAAEVIAQAEKRAAQIVEEAKLAAKEEGDRQLAAAQANIEQEANRAREGLREQVAALAVAGAEKILRREVNAQTHADLLSQLKAEL</sequence>
<name>ATPF_THIDA</name>
<keyword id="KW-0066">ATP synthesis</keyword>
<keyword id="KW-0997">Cell inner membrane</keyword>
<keyword id="KW-1003">Cell membrane</keyword>
<keyword id="KW-0138">CF(0)</keyword>
<keyword id="KW-0375">Hydrogen ion transport</keyword>
<keyword id="KW-0406">Ion transport</keyword>
<keyword id="KW-0472">Membrane</keyword>
<keyword id="KW-1185">Reference proteome</keyword>
<keyword id="KW-0812">Transmembrane</keyword>
<keyword id="KW-1133">Transmembrane helix</keyword>
<keyword id="KW-0813">Transport</keyword>
<evidence type="ECO:0000255" key="1">
    <source>
        <dbReference type="HAMAP-Rule" id="MF_01398"/>
    </source>
</evidence>
<accession>Q3SF62</accession>
<organism>
    <name type="scientific">Thiobacillus denitrificans (strain ATCC 25259 / T1)</name>
    <dbReference type="NCBI Taxonomy" id="292415"/>
    <lineage>
        <taxon>Bacteria</taxon>
        <taxon>Pseudomonadati</taxon>
        <taxon>Pseudomonadota</taxon>
        <taxon>Betaproteobacteria</taxon>
        <taxon>Nitrosomonadales</taxon>
        <taxon>Thiobacillaceae</taxon>
        <taxon>Thiobacillus</taxon>
    </lineage>
</organism>